<sequence length="343" mass="37387">MTTDTSGRTGNPAAAAPAERFRYGFLKGNPQLTKNGELKHLLTIEGLPRAILNQILDTAEQFVSVTDREVKKVPLLRGKSVFNLFFENSTRTRTTFEIAAKRLSADVINLNINASSTSKGESLLDTINNLSAMHADLFVVRHASSGAPYLIAEHCAPHVHVINAGDGRHAHPTQGLLDMYTIRHYKRDFTKLRVAIVGDILHSRVARSDIHALTTLGVPEVRAIGPRTLLPGGLEQMGVRVFHNLDEGLRDVDVIIMLRLQNERMSGALLPSAQEYFKSWGLTPERLALAAPDAIVMHPGPMNRGVEIDSQVADGPQSVILNQVTFGIAVRMAVMGIVAGTSD</sequence>
<protein>
    <recommendedName>
        <fullName evidence="1">Aspartate carbamoyltransferase catalytic subunit</fullName>
        <ecNumber evidence="1">2.1.3.2</ecNumber>
    </recommendedName>
    <alternativeName>
        <fullName evidence="1">Aspartate transcarbamylase</fullName>
        <shortName evidence="1">ATCase</shortName>
    </alternativeName>
</protein>
<accession>A1V206</accession>
<organism>
    <name type="scientific">Burkholderia mallei (strain SAVP1)</name>
    <dbReference type="NCBI Taxonomy" id="320388"/>
    <lineage>
        <taxon>Bacteria</taxon>
        <taxon>Pseudomonadati</taxon>
        <taxon>Pseudomonadota</taxon>
        <taxon>Betaproteobacteria</taxon>
        <taxon>Burkholderiales</taxon>
        <taxon>Burkholderiaceae</taxon>
        <taxon>Burkholderia</taxon>
        <taxon>pseudomallei group</taxon>
    </lineage>
</organism>
<keyword id="KW-0665">Pyrimidine biosynthesis</keyword>
<keyword id="KW-0808">Transferase</keyword>
<proteinExistence type="inferred from homology"/>
<name>PYRB_BURMS</name>
<feature type="chain" id="PRO_0000329100" description="Aspartate carbamoyltransferase catalytic subunit">
    <location>
        <begin position="1"/>
        <end position="343"/>
    </location>
</feature>
<feature type="binding site" evidence="1">
    <location>
        <position position="91"/>
    </location>
    <ligand>
        <name>carbamoyl phosphate</name>
        <dbReference type="ChEBI" id="CHEBI:58228"/>
    </ligand>
</feature>
<feature type="binding site" evidence="1">
    <location>
        <position position="92"/>
    </location>
    <ligand>
        <name>carbamoyl phosphate</name>
        <dbReference type="ChEBI" id="CHEBI:58228"/>
    </ligand>
</feature>
<feature type="binding site" evidence="1">
    <location>
        <position position="119"/>
    </location>
    <ligand>
        <name>L-aspartate</name>
        <dbReference type="ChEBI" id="CHEBI:29991"/>
    </ligand>
</feature>
<feature type="binding site" evidence="1">
    <location>
        <position position="141"/>
    </location>
    <ligand>
        <name>carbamoyl phosphate</name>
        <dbReference type="ChEBI" id="CHEBI:58228"/>
    </ligand>
</feature>
<feature type="binding site" evidence="1">
    <location>
        <position position="171"/>
    </location>
    <ligand>
        <name>carbamoyl phosphate</name>
        <dbReference type="ChEBI" id="CHEBI:58228"/>
    </ligand>
</feature>
<feature type="binding site" evidence="1">
    <location>
        <position position="174"/>
    </location>
    <ligand>
        <name>carbamoyl phosphate</name>
        <dbReference type="ChEBI" id="CHEBI:58228"/>
    </ligand>
</feature>
<feature type="binding site" evidence="1">
    <location>
        <position position="204"/>
    </location>
    <ligand>
        <name>L-aspartate</name>
        <dbReference type="ChEBI" id="CHEBI:29991"/>
    </ligand>
</feature>
<feature type="binding site" evidence="1">
    <location>
        <position position="259"/>
    </location>
    <ligand>
        <name>L-aspartate</name>
        <dbReference type="ChEBI" id="CHEBI:29991"/>
    </ligand>
</feature>
<feature type="binding site" evidence="1">
    <location>
        <position position="300"/>
    </location>
    <ligand>
        <name>carbamoyl phosphate</name>
        <dbReference type="ChEBI" id="CHEBI:58228"/>
    </ligand>
</feature>
<feature type="binding site" evidence="1">
    <location>
        <position position="301"/>
    </location>
    <ligand>
        <name>carbamoyl phosphate</name>
        <dbReference type="ChEBI" id="CHEBI:58228"/>
    </ligand>
</feature>
<comment type="function">
    <text evidence="1">Catalyzes the condensation of carbamoyl phosphate and aspartate to form carbamoyl aspartate and inorganic phosphate, the committed step in the de novo pyrimidine nucleotide biosynthesis pathway.</text>
</comment>
<comment type="catalytic activity">
    <reaction evidence="1">
        <text>carbamoyl phosphate + L-aspartate = N-carbamoyl-L-aspartate + phosphate + H(+)</text>
        <dbReference type="Rhea" id="RHEA:20013"/>
        <dbReference type="ChEBI" id="CHEBI:15378"/>
        <dbReference type="ChEBI" id="CHEBI:29991"/>
        <dbReference type="ChEBI" id="CHEBI:32814"/>
        <dbReference type="ChEBI" id="CHEBI:43474"/>
        <dbReference type="ChEBI" id="CHEBI:58228"/>
        <dbReference type="EC" id="2.1.3.2"/>
    </reaction>
</comment>
<comment type="pathway">
    <text evidence="1">Pyrimidine metabolism; UMP biosynthesis via de novo pathway; (S)-dihydroorotate from bicarbonate: step 2/3.</text>
</comment>
<comment type="subunit">
    <text evidence="1">Heterododecamer (2C3:3R2) of six catalytic PyrB chains organized as two trimers (C3), and six regulatory PyrI chains organized as three dimers (R2).</text>
</comment>
<comment type="similarity">
    <text evidence="1">Belongs to the aspartate/ornithine carbamoyltransferase superfamily. ATCase family.</text>
</comment>
<comment type="sequence caution" evidence="2">
    <conflict type="erroneous initiation">
        <sequence resource="EMBL-CDS" id="ABM50109"/>
    </conflict>
</comment>
<evidence type="ECO:0000255" key="1">
    <source>
        <dbReference type="HAMAP-Rule" id="MF_00001"/>
    </source>
</evidence>
<evidence type="ECO:0000305" key="2"/>
<reference key="1">
    <citation type="journal article" date="2010" name="Genome Biol. Evol.">
        <title>Continuing evolution of Burkholderia mallei through genome reduction and large-scale rearrangements.</title>
        <authorList>
            <person name="Losada L."/>
            <person name="Ronning C.M."/>
            <person name="DeShazer D."/>
            <person name="Woods D."/>
            <person name="Fedorova N."/>
            <person name="Kim H.S."/>
            <person name="Shabalina S.A."/>
            <person name="Pearson T.R."/>
            <person name="Brinkac L."/>
            <person name="Tan P."/>
            <person name="Nandi T."/>
            <person name="Crabtree J."/>
            <person name="Badger J."/>
            <person name="Beckstrom-Sternberg S."/>
            <person name="Saqib M."/>
            <person name="Schutzer S.E."/>
            <person name="Keim P."/>
            <person name="Nierman W.C."/>
        </authorList>
    </citation>
    <scope>NUCLEOTIDE SEQUENCE [LARGE SCALE GENOMIC DNA]</scope>
    <source>
        <strain>SAVP1</strain>
    </source>
</reference>
<dbReference type="EC" id="2.1.3.2" evidence="1"/>
<dbReference type="EMBL" id="CP000526">
    <property type="protein sequence ID" value="ABM50109.1"/>
    <property type="status" value="ALT_INIT"/>
    <property type="molecule type" value="Genomic_DNA"/>
</dbReference>
<dbReference type="RefSeq" id="WP_004534003.1">
    <property type="nucleotide sequence ID" value="NC_008785.1"/>
</dbReference>
<dbReference type="SMR" id="A1V206"/>
<dbReference type="KEGG" id="bmv:BMASAVP1_A0919"/>
<dbReference type="HOGENOM" id="CLU_043846_2_0_4"/>
<dbReference type="UniPathway" id="UPA00070">
    <property type="reaction ID" value="UER00116"/>
</dbReference>
<dbReference type="GO" id="GO:0005829">
    <property type="term" value="C:cytosol"/>
    <property type="evidence" value="ECO:0007669"/>
    <property type="project" value="TreeGrafter"/>
</dbReference>
<dbReference type="GO" id="GO:0016597">
    <property type="term" value="F:amino acid binding"/>
    <property type="evidence" value="ECO:0007669"/>
    <property type="project" value="InterPro"/>
</dbReference>
<dbReference type="GO" id="GO:0004070">
    <property type="term" value="F:aspartate carbamoyltransferase activity"/>
    <property type="evidence" value="ECO:0007669"/>
    <property type="project" value="UniProtKB-UniRule"/>
</dbReference>
<dbReference type="GO" id="GO:0006207">
    <property type="term" value="P:'de novo' pyrimidine nucleobase biosynthetic process"/>
    <property type="evidence" value="ECO:0007669"/>
    <property type="project" value="InterPro"/>
</dbReference>
<dbReference type="GO" id="GO:0044205">
    <property type="term" value="P:'de novo' UMP biosynthetic process"/>
    <property type="evidence" value="ECO:0007669"/>
    <property type="project" value="UniProtKB-UniRule"/>
</dbReference>
<dbReference type="GO" id="GO:0006520">
    <property type="term" value="P:amino acid metabolic process"/>
    <property type="evidence" value="ECO:0007669"/>
    <property type="project" value="InterPro"/>
</dbReference>
<dbReference type="FunFam" id="3.40.50.1370:FF:000007">
    <property type="entry name" value="Aspartate carbamoyltransferase"/>
    <property type="match status" value="1"/>
</dbReference>
<dbReference type="Gene3D" id="3.40.50.1370">
    <property type="entry name" value="Aspartate/ornithine carbamoyltransferase"/>
    <property type="match status" value="2"/>
</dbReference>
<dbReference type="HAMAP" id="MF_00001">
    <property type="entry name" value="Asp_carb_tr"/>
    <property type="match status" value="1"/>
</dbReference>
<dbReference type="InterPro" id="IPR006132">
    <property type="entry name" value="Asp/Orn_carbamoyltranf_P-bd"/>
</dbReference>
<dbReference type="InterPro" id="IPR006130">
    <property type="entry name" value="Asp/Orn_carbamoylTrfase"/>
</dbReference>
<dbReference type="InterPro" id="IPR036901">
    <property type="entry name" value="Asp/Orn_carbamoylTrfase_sf"/>
</dbReference>
<dbReference type="InterPro" id="IPR002082">
    <property type="entry name" value="Asp_carbamoyltransf"/>
</dbReference>
<dbReference type="InterPro" id="IPR006131">
    <property type="entry name" value="Asp_carbamoyltransf_Asp/Orn-bd"/>
</dbReference>
<dbReference type="NCBIfam" id="TIGR00670">
    <property type="entry name" value="asp_carb_tr"/>
    <property type="match status" value="1"/>
</dbReference>
<dbReference type="NCBIfam" id="NF002032">
    <property type="entry name" value="PRK00856.1"/>
    <property type="match status" value="1"/>
</dbReference>
<dbReference type="PANTHER" id="PTHR45753:SF6">
    <property type="entry name" value="ASPARTATE CARBAMOYLTRANSFERASE"/>
    <property type="match status" value="1"/>
</dbReference>
<dbReference type="PANTHER" id="PTHR45753">
    <property type="entry name" value="ORNITHINE CARBAMOYLTRANSFERASE, MITOCHONDRIAL"/>
    <property type="match status" value="1"/>
</dbReference>
<dbReference type="Pfam" id="PF00185">
    <property type="entry name" value="OTCace"/>
    <property type="match status" value="1"/>
</dbReference>
<dbReference type="Pfam" id="PF02729">
    <property type="entry name" value="OTCace_N"/>
    <property type="match status" value="1"/>
</dbReference>
<dbReference type="PRINTS" id="PR00100">
    <property type="entry name" value="AOTCASE"/>
</dbReference>
<dbReference type="PRINTS" id="PR00101">
    <property type="entry name" value="ATCASE"/>
</dbReference>
<dbReference type="SUPFAM" id="SSF53671">
    <property type="entry name" value="Aspartate/ornithine carbamoyltransferase"/>
    <property type="match status" value="1"/>
</dbReference>
<dbReference type="PROSITE" id="PS00097">
    <property type="entry name" value="CARBAMOYLTRANSFERASE"/>
    <property type="match status" value="1"/>
</dbReference>
<gene>
    <name evidence="1" type="primary">pyrB</name>
    <name type="ordered locus">BMASAVP1_A0919</name>
</gene>